<dbReference type="EC" id="2.5.1.75" evidence="1"/>
<dbReference type="EMBL" id="AM180355">
    <property type="protein sequence ID" value="CAJ68850.2"/>
    <property type="molecule type" value="Genomic_DNA"/>
</dbReference>
<dbReference type="RefSeq" id="WP_011861408.1">
    <property type="nucleotide sequence ID" value="NZ_JAUPES010000034.1"/>
</dbReference>
<dbReference type="RefSeq" id="YP_001088481.2">
    <property type="nucleotide sequence ID" value="NC_009089.1"/>
</dbReference>
<dbReference type="SMR" id="Q187T5"/>
<dbReference type="STRING" id="272563.CD630_19750"/>
<dbReference type="EnsemblBacteria" id="CAJ68850">
    <property type="protein sequence ID" value="CAJ68850"/>
    <property type="gene ID" value="CD630_19750"/>
</dbReference>
<dbReference type="KEGG" id="cdf:CD630_19750"/>
<dbReference type="KEGG" id="pdc:CDIF630_02180"/>
<dbReference type="PATRIC" id="fig|272563.120.peg.2072"/>
<dbReference type="eggNOG" id="COG0324">
    <property type="taxonomic scope" value="Bacteria"/>
</dbReference>
<dbReference type="OrthoDB" id="9776390at2"/>
<dbReference type="PhylomeDB" id="Q187T5"/>
<dbReference type="BioCyc" id="PDIF272563:G12WB-2117-MONOMER"/>
<dbReference type="Proteomes" id="UP000001978">
    <property type="component" value="Chromosome"/>
</dbReference>
<dbReference type="GO" id="GO:0005524">
    <property type="term" value="F:ATP binding"/>
    <property type="evidence" value="ECO:0007669"/>
    <property type="project" value="UniProtKB-UniRule"/>
</dbReference>
<dbReference type="GO" id="GO:0052381">
    <property type="term" value="F:tRNA dimethylallyltransferase activity"/>
    <property type="evidence" value="ECO:0007669"/>
    <property type="project" value="UniProtKB-UniRule"/>
</dbReference>
<dbReference type="GO" id="GO:0006400">
    <property type="term" value="P:tRNA modification"/>
    <property type="evidence" value="ECO:0007669"/>
    <property type="project" value="TreeGrafter"/>
</dbReference>
<dbReference type="Gene3D" id="1.10.20.140">
    <property type="match status" value="1"/>
</dbReference>
<dbReference type="Gene3D" id="3.40.50.300">
    <property type="entry name" value="P-loop containing nucleotide triphosphate hydrolases"/>
    <property type="match status" value="1"/>
</dbReference>
<dbReference type="HAMAP" id="MF_00185">
    <property type="entry name" value="IPP_trans"/>
    <property type="match status" value="1"/>
</dbReference>
<dbReference type="InterPro" id="IPR039657">
    <property type="entry name" value="Dimethylallyltransferase"/>
</dbReference>
<dbReference type="InterPro" id="IPR018022">
    <property type="entry name" value="IPT"/>
</dbReference>
<dbReference type="InterPro" id="IPR027417">
    <property type="entry name" value="P-loop_NTPase"/>
</dbReference>
<dbReference type="NCBIfam" id="TIGR00174">
    <property type="entry name" value="miaA"/>
    <property type="match status" value="1"/>
</dbReference>
<dbReference type="PANTHER" id="PTHR11088">
    <property type="entry name" value="TRNA DIMETHYLALLYLTRANSFERASE"/>
    <property type="match status" value="1"/>
</dbReference>
<dbReference type="PANTHER" id="PTHR11088:SF60">
    <property type="entry name" value="TRNA DIMETHYLALLYLTRANSFERASE"/>
    <property type="match status" value="1"/>
</dbReference>
<dbReference type="Pfam" id="PF01715">
    <property type="entry name" value="IPPT"/>
    <property type="match status" value="1"/>
</dbReference>
<dbReference type="SUPFAM" id="SSF52540">
    <property type="entry name" value="P-loop containing nucleoside triphosphate hydrolases"/>
    <property type="match status" value="2"/>
</dbReference>
<name>MIAA_CLOD6</name>
<organism>
    <name type="scientific">Clostridioides difficile (strain 630)</name>
    <name type="common">Peptoclostridium difficile</name>
    <dbReference type="NCBI Taxonomy" id="272563"/>
    <lineage>
        <taxon>Bacteria</taxon>
        <taxon>Bacillati</taxon>
        <taxon>Bacillota</taxon>
        <taxon>Clostridia</taxon>
        <taxon>Peptostreptococcales</taxon>
        <taxon>Peptostreptococcaceae</taxon>
        <taxon>Clostridioides</taxon>
    </lineage>
</organism>
<comment type="function">
    <text evidence="1">Catalyzes the transfer of a dimethylallyl group onto the adenine at position 37 in tRNAs that read codons beginning with uridine, leading to the formation of N6-(dimethylallyl)adenosine (i(6)A).</text>
</comment>
<comment type="catalytic activity">
    <reaction evidence="1">
        <text>adenosine(37) in tRNA + dimethylallyl diphosphate = N(6)-dimethylallyladenosine(37) in tRNA + diphosphate</text>
        <dbReference type="Rhea" id="RHEA:26482"/>
        <dbReference type="Rhea" id="RHEA-COMP:10162"/>
        <dbReference type="Rhea" id="RHEA-COMP:10375"/>
        <dbReference type="ChEBI" id="CHEBI:33019"/>
        <dbReference type="ChEBI" id="CHEBI:57623"/>
        <dbReference type="ChEBI" id="CHEBI:74411"/>
        <dbReference type="ChEBI" id="CHEBI:74415"/>
        <dbReference type="EC" id="2.5.1.75"/>
    </reaction>
</comment>
<comment type="cofactor">
    <cofactor evidence="1">
        <name>Mg(2+)</name>
        <dbReference type="ChEBI" id="CHEBI:18420"/>
    </cofactor>
</comment>
<comment type="subunit">
    <text evidence="1">Monomer.</text>
</comment>
<comment type="similarity">
    <text evidence="1">Belongs to the IPP transferase family.</text>
</comment>
<gene>
    <name evidence="1" type="primary">miaA</name>
    <name type="ordered locus">CD630_19750</name>
</gene>
<sequence>MKKIPLIILTGPTAVGKTDLSIKLAKDMNAEIISADSMQIYEYMDIGSAKVTEKEMQGVKHYLIDEVKPDYPFSVSEFQQRAKKYIHEINKKEKCVLVTGGTGLYLNSLIYNMDFAQSDANNELREELQKQLAEKGIDYMHNKLKELDEESANRIHKNNTKRVIRALEVCLSGKKMNDFSSDLKFNEEYQPIIIVLNRDREHLYQRINMRVDIMIKNGLVEEVKKLLSMGFKKDMISMQGIGYKEILKYLDGEYTYEEAIEIIKRDSRRYAKRQITWFKRYKTAKWFDLDQYENIDELKNEIILYIKDSIK</sequence>
<reference key="1">
    <citation type="journal article" date="2006" name="Nat. Genet.">
        <title>The multidrug-resistant human pathogen Clostridium difficile has a highly mobile, mosaic genome.</title>
        <authorList>
            <person name="Sebaihia M."/>
            <person name="Wren B.W."/>
            <person name="Mullany P."/>
            <person name="Fairweather N.F."/>
            <person name="Minton N."/>
            <person name="Stabler R."/>
            <person name="Thomson N.R."/>
            <person name="Roberts A.P."/>
            <person name="Cerdeno-Tarraga A.M."/>
            <person name="Wang H."/>
            <person name="Holden M.T.G."/>
            <person name="Wright A."/>
            <person name="Churcher C."/>
            <person name="Quail M.A."/>
            <person name="Baker S."/>
            <person name="Bason N."/>
            <person name="Brooks K."/>
            <person name="Chillingworth T."/>
            <person name="Cronin A."/>
            <person name="Davis P."/>
            <person name="Dowd L."/>
            <person name="Fraser A."/>
            <person name="Feltwell T."/>
            <person name="Hance Z."/>
            <person name="Holroyd S."/>
            <person name="Jagels K."/>
            <person name="Moule S."/>
            <person name="Mungall K."/>
            <person name="Price C."/>
            <person name="Rabbinowitsch E."/>
            <person name="Sharp S."/>
            <person name="Simmonds M."/>
            <person name="Stevens K."/>
            <person name="Unwin L."/>
            <person name="Whithead S."/>
            <person name="Dupuy B."/>
            <person name="Dougan G."/>
            <person name="Barrell B."/>
            <person name="Parkhill J."/>
        </authorList>
    </citation>
    <scope>NUCLEOTIDE SEQUENCE [LARGE SCALE GENOMIC DNA]</scope>
    <source>
        <strain>630</strain>
    </source>
</reference>
<evidence type="ECO:0000255" key="1">
    <source>
        <dbReference type="HAMAP-Rule" id="MF_00185"/>
    </source>
</evidence>
<proteinExistence type="inferred from homology"/>
<feature type="chain" id="PRO_0000377123" description="tRNA dimethylallyltransferase">
    <location>
        <begin position="1"/>
        <end position="311"/>
    </location>
</feature>
<feature type="region of interest" description="Interaction with substrate tRNA" evidence="1">
    <location>
        <begin position="36"/>
        <end position="39"/>
    </location>
</feature>
<feature type="binding site" evidence="1">
    <location>
        <begin position="11"/>
        <end position="18"/>
    </location>
    <ligand>
        <name>ATP</name>
        <dbReference type="ChEBI" id="CHEBI:30616"/>
    </ligand>
</feature>
<feature type="binding site" evidence="1">
    <location>
        <begin position="13"/>
        <end position="18"/>
    </location>
    <ligand>
        <name>substrate</name>
    </ligand>
</feature>
<feature type="site" description="Interaction with substrate tRNA" evidence="1">
    <location>
        <position position="102"/>
    </location>
</feature>
<feature type="site" description="Interaction with substrate tRNA" evidence="1">
    <location>
        <position position="125"/>
    </location>
</feature>
<protein>
    <recommendedName>
        <fullName evidence="1">tRNA dimethylallyltransferase</fullName>
        <ecNumber evidence="1">2.5.1.75</ecNumber>
    </recommendedName>
    <alternativeName>
        <fullName evidence="1">Dimethylallyl diphosphate:tRNA dimethylallyltransferase</fullName>
        <shortName evidence="1">DMAPP:tRNA dimethylallyltransferase</shortName>
        <shortName evidence="1">DMATase</shortName>
    </alternativeName>
    <alternativeName>
        <fullName evidence="1">Isopentenyl-diphosphate:tRNA isopentenyltransferase</fullName>
        <shortName evidence="1">IPP transferase</shortName>
        <shortName evidence="1">IPPT</shortName>
        <shortName evidence="1">IPTase</shortName>
    </alternativeName>
</protein>
<keyword id="KW-0067">ATP-binding</keyword>
<keyword id="KW-0460">Magnesium</keyword>
<keyword id="KW-0547">Nucleotide-binding</keyword>
<keyword id="KW-1185">Reference proteome</keyword>
<keyword id="KW-0808">Transferase</keyword>
<keyword id="KW-0819">tRNA processing</keyword>
<accession>Q187T5</accession>